<dbReference type="EC" id="2.4.1.21" evidence="1"/>
<dbReference type="EMBL" id="CP000026">
    <property type="protein sequence ID" value="AAV79199.1"/>
    <property type="molecule type" value="Genomic_DNA"/>
</dbReference>
<dbReference type="RefSeq" id="WP_001197669.1">
    <property type="nucleotide sequence ID" value="NC_006511.1"/>
</dbReference>
<dbReference type="SMR" id="Q5PM09"/>
<dbReference type="CAZy" id="GT5">
    <property type="family name" value="Glycosyltransferase Family 5"/>
</dbReference>
<dbReference type="KEGG" id="spt:SPA3386"/>
<dbReference type="HOGENOM" id="CLU_009583_18_4_6"/>
<dbReference type="UniPathway" id="UPA00164"/>
<dbReference type="Proteomes" id="UP000008185">
    <property type="component" value="Chromosome"/>
</dbReference>
<dbReference type="GO" id="GO:0005829">
    <property type="term" value="C:cytosol"/>
    <property type="evidence" value="ECO:0007669"/>
    <property type="project" value="TreeGrafter"/>
</dbReference>
<dbReference type="GO" id="GO:0009011">
    <property type="term" value="F:alpha-1,4-glucan glucosyltransferase (ADP-glucose donor) activity"/>
    <property type="evidence" value="ECO:0007669"/>
    <property type="project" value="UniProtKB-UniRule"/>
</dbReference>
<dbReference type="GO" id="GO:0004373">
    <property type="term" value="F:alpha-1,4-glucan glucosyltransferase (UDP-glucose donor) activity"/>
    <property type="evidence" value="ECO:0007669"/>
    <property type="project" value="InterPro"/>
</dbReference>
<dbReference type="GO" id="GO:0005978">
    <property type="term" value="P:glycogen biosynthetic process"/>
    <property type="evidence" value="ECO:0007669"/>
    <property type="project" value="UniProtKB-UniRule"/>
</dbReference>
<dbReference type="CDD" id="cd03791">
    <property type="entry name" value="GT5_Glycogen_synthase_DULL1-like"/>
    <property type="match status" value="1"/>
</dbReference>
<dbReference type="FunFam" id="3.40.50.2000:FF:000008">
    <property type="entry name" value="Glycogen synthase"/>
    <property type="match status" value="1"/>
</dbReference>
<dbReference type="FunFam" id="3.40.50.2000:FF:000011">
    <property type="entry name" value="Glycogen synthase"/>
    <property type="match status" value="1"/>
</dbReference>
<dbReference type="Gene3D" id="3.40.50.2000">
    <property type="entry name" value="Glycogen Phosphorylase B"/>
    <property type="match status" value="2"/>
</dbReference>
<dbReference type="HAMAP" id="MF_00484">
    <property type="entry name" value="Glycogen_synth"/>
    <property type="match status" value="1"/>
</dbReference>
<dbReference type="InterPro" id="IPR001296">
    <property type="entry name" value="Glyco_trans_1"/>
</dbReference>
<dbReference type="InterPro" id="IPR011835">
    <property type="entry name" value="GS/SS"/>
</dbReference>
<dbReference type="InterPro" id="IPR013534">
    <property type="entry name" value="Starch_synth_cat_dom"/>
</dbReference>
<dbReference type="NCBIfam" id="TIGR02095">
    <property type="entry name" value="glgA"/>
    <property type="match status" value="1"/>
</dbReference>
<dbReference type="NCBIfam" id="NF001899">
    <property type="entry name" value="PRK00654.1-2"/>
    <property type="match status" value="1"/>
</dbReference>
<dbReference type="PANTHER" id="PTHR45825:SF11">
    <property type="entry name" value="ALPHA AMYLASE DOMAIN-CONTAINING PROTEIN"/>
    <property type="match status" value="1"/>
</dbReference>
<dbReference type="PANTHER" id="PTHR45825">
    <property type="entry name" value="GRANULE-BOUND STARCH SYNTHASE 1, CHLOROPLASTIC/AMYLOPLASTIC"/>
    <property type="match status" value="1"/>
</dbReference>
<dbReference type="Pfam" id="PF08323">
    <property type="entry name" value="Glyco_transf_5"/>
    <property type="match status" value="1"/>
</dbReference>
<dbReference type="Pfam" id="PF00534">
    <property type="entry name" value="Glycos_transf_1"/>
    <property type="match status" value="1"/>
</dbReference>
<dbReference type="SUPFAM" id="SSF53756">
    <property type="entry name" value="UDP-Glycosyltransferase/glycogen phosphorylase"/>
    <property type="match status" value="1"/>
</dbReference>
<feature type="chain" id="PRO_0000230262" description="Glycogen synthase">
    <location>
        <begin position="1"/>
        <end position="477"/>
    </location>
</feature>
<feature type="binding site" evidence="1">
    <location>
        <position position="15"/>
    </location>
    <ligand>
        <name>ADP-alpha-D-glucose</name>
        <dbReference type="ChEBI" id="CHEBI:57498"/>
    </ligand>
</feature>
<accession>Q5PM09</accession>
<reference key="1">
    <citation type="journal article" date="2004" name="Nat. Genet.">
        <title>Comparison of genome degradation in Paratyphi A and Typhi, human-restricted serovars of Salmonella enterica that cause typhoid.</title>
        <authorList>
            <person name="McClelland M."/>
            <person name="Sanderson K.E."/>
            <person name="Clifton S.W."/>
            <person name="Latreille P."/>
            <person name="Porwollik S."/>
            <person name="Sabo A."/>
            <person name="Meyer R."/>
            <person name="Bieri T."/>
            <person name="Ozersky P."/>
            <person name="McLellan M."/>
            <person name="Harkins C.R."/>
            <person name="Wang C."/>
            <person name="Nguyen C."/>
            <person name="Berghoff A."/>
            <person name="Elliott G."/>
            <person name="Kohlberg S."/>
            <person name="Strong C."/>
            <person name="Du F."/>
            <person name="Carter J."/>
            <person name="Kremizki C."/>
            <person name="Layman D."/>
            <person name="Leonard S."/>
            <person name="Sun H."/>
            <person name="Fulton L."/>
            <person name="Nash W."/>
            <person name="Miner T."/>
            <person name="Minx P."/>
            <person name="Delehaunty K."/>
            <person name="Fronick C."/>
            <person name="Magrini V."/>
            <person name="Nhan M."/>
            <person name="Warren W."/>
            <person name="Florea L."/>
            <person name="Spieth J."/>
            <person name="Wilson R.K."/>
        </authorList>
    </citation>
    <scope>NUCLEOTIDE SEQUENCE [LARGE SCALE GENOMIC DNA]</scope>
    <source>
        <strain>ATCC 9150 / SARB42</strain>
    </source>
</reference>
<protein>
    <recommendedName>
        <fullName evidence="1">Glycogen synthase</fullName>
        <ecNumber evidence="1">2.4.1.21</ecNumber>
    </recommendedName>
    <alternativeName>
        <fullName evidence="1">Starch [bacterial glycogen] synthase</fullName>
    </alternativeName>
</protein>
<organism>
    <name type="scientific">Salmonella paratyphi A (strain ATCC 9150 / SARB42)</name>
    <dbReference type="NCBI Taxonomy" id="295319"/>
    <lineage>
        <taxon>Bacteria</taxon>
        <taxon>Pseudomonadati</taxon>
        <taxon>Pseudomonadota</taxon>
        <taxon>Gammaproteobacteria</taxon>
        <taxon>Enterobacterales</taxon>
        <taxon>Enterobacteriaceae</taxon>
        <taxon>Salmonella</taxon>
    </lineage>
</organism>
<comment type="function">
    <text evidence="1">Synthesizes alpha-1,4-glucan chains using ADP-glucose.</text>
</comment>
<comment type="catalytic activity">
    <reaction evidence="1">
        <text>[(1-&gt;4)-alpha-D-glucosyl](n) + ADP-alpha-D-glucose = [(1-&gt;4)-alpha-D-glucosyl](n+1) + ADP + H(+)</text>
        <dbReference type="Rhea" id="RHEA:18189"/>
        <dbReference type="Rhea" id="RHEA-COMP:9584"/>
        <dbReference type="Rhea" id="RHEA-COMP:9587"/>
        <dbReference type="ChEBI" id="CHEBI:15378"/>
        <dbReference type="ChEBI" id="CHEBI:15444"/>
        <dbReference type="ChEBI" id="CHEBI:57498"/>
        <dbReference type="ChEBI" id="CHEBI:456216"/>
        <dbReference type="EC" id="2.4.1.21"/>
    </reaction>
</comment>
<comment type="pathway">
    <text evidence="1">Glycan biosynthesis; glycogen biosynthesis.</text>
</comment>
<comment type="similarity">
    <text evidence="1">Belongs to the glycosyltransferase 1 family. Bacterial/plant glycogen synthase subfamily.</text>
</comment>
<evidence type="ECO:0000255" key="1">
    <source>
        <dbReference type="HAMAP-Rule" id="MF_00484"/>
    </source>
</evidence>
<proteinExistence type="inferred from homology"/>
<gene>
    <name evidence="1" type="primary">glgA</name>
    <name type="ordered locus">SPA3386</name>
</gene>
<name>GLGA_SALPA</name>
<keyword id="KW-0320">Glycogen biosynthesis</keyword>
<keyword id="KW-0328">Glycosyltransferase</keyword>
<keyword id="KW-0808">Transferase</keyword>
<sequence>MQVLHVCSEMFPLLKTGGLADVIGALPAAQIADGVDVRVLLPGFPDIRRGIPDAHVVSRRDTFAGKISLLFGHYNGVGIYLIDAPHLYERPGSPYHDTNLYAYTDNVLRFALLGWVGCEMACGLDPFWRPDVVHAHDWHAGLAPAYLAARGRPAKSVFTVHNLAYQGMFYAKHMDDIELPWSFFNMHGLEFNGQLSFLKAGLYYADHITAVSPTYAREITEPQFAYGMEGLLRQRHLEGRLSGILNGVDEKIWNPESDLLLASRYTRDTLEEKAENKRQLQIAMGLKVNDKVPLFAVVSRLTNQKGLDLVLEALPGLLEQGGQLALLGAGDPVLQEGFLAAAAEHPGQVGVQIGYHEAFSHRIMGGADVILVPSRFEPCGLTQLYGLKYGTLPLVRRTGGLADTVSDSSLENLADGIASGFVFEDSNAWSLLRAIRRAFVLWSRPSLWRFVQRQAMAMDFSWQVAAKSYRELYYRLK</sequence>